<accession>Q57AH4</accession>
<reference key="1">
    <citation type="journal article" date="2005" name="J. Bacteriol.">
        <title>Completion of the genome sequence of Brucella abortus and comparison to the highly similar genomes of Brucella melitensis and Brucella suis.</title>
        <authorList>
            <person name="Halling S.M."/>
            <person name="Peterson-Burch B.D."/>
            <person name="Bricker B.J."/>
            <person name="Zuerner R.L."/>
            <person name="Qing Z."/>
            <person name="Li L.-L."/>
            <person name="Kapur V."/>
            <person name="Alt D.P."/>
            <person name="Olsen S.C."/>
        </authorList>
    </citation>
    <scope>NUCLEOTIDE SEQUENCE [LARGE SCALE GENOMIC DNA]</scope>
    <source>
        <strain>9-941</strain>
    </source>
</reference>
<evidence type="ECO:0000255" key="1">
    <source>
        <dbReference type="HAMAP-Rule" id="MF_01014"/>
    </source>
</evidence>
<name>HIS4_BRUAB</name>
<proteinExistence type="inferred from homology"/>
<sequence>MILFPAIDLKDGQCVRLKLGDMDQATIYNEDPAAQAKAFEDQGFEWLHVVDLNGAFAGESVNGTAVEAILKATKNPVQLGGGIRTLAHIENWLSRGLRRVILGTVAVRDPALVMEACKAFPGQVAVGIDAKGGKVAVEGWAEASRLGVIELAKKFEGAGVAAIIYTDIDRDGVLAGINWDSTLALAEAVSIPVIASGGLASMEDIRRLATPEMRKLEGAISGRALYDGRIDPAEALSVLRAAA</sequence>
<comment type="catalytic activity">
    <reaction evidence="1">
        <text>1-(5-phospho-beta-D-ribosyl)-5-[(5-phospho-beta-D-ribosylamino)methylideneamino]imidazole-4-carboxamide = 5-[(5-phospho-1-deoxy-D-ribulos-1-ylimino)methylamino]-1-(5-phospho-beta-D-ribosyl)imidazole-4-carboxamide</text>
        <dbReference type="Rhea" id="RHEA:15469"/>
        <dbReference type="ChEBI" id="CHEBI:58435"/>
        <dbReference type="ChEBI" id="CHEBI:58525"/>
        <dbReference type="EC" id="5.3.1.16"/>
    </reaction>
</comment>
<comment type="pathway">
    <text evidence="1">Amino-acid biosynthesis; L-histidine biosynthesis; L-histidine from 5-phospho-alpha-D-ribose 1-diphosphate: step 4/9.</text>
</comment>
<comment type="subcellular location">
    <subcellularLocation>
        <location evidence="1">Cytoplasm</location>
    </subcellularLocation>
</comment>
<comment type="similarity">
    <text evidence="1">Belongs to the HisA/HisF family.</text>
</comment>
<organism>
    <name type="scientific">Brucella abortus biovar 1 (strain 9-941)</name>
    <dbReference type="NCBI Taxonomy" id="262698"/>
    <lineage>
        <taxon>Bacteria</taxon>
        <taxon>Pseudomonadati</taxon>
        <taxon>Pseudomonadota</taxon>
        <taxon>Alphaproteobacteria</taxon>
        <taxon>Hyphomicrobiales</taxon>
        <taxon>Brucellaceae</taxon>
        <taxon>Brucella/Ochrobactrum group</taxon>
        <taxon>Brucella</taxon>
    </lineage>
</organism>
<feature type="chain" id="PRO_0000229044" description="1-(5-phosphoribosyl)-5-[(5-phosphoribosylamino)methylideneamino] imidazole-4-carboxamide isomerase">
    <location>
        <begin position="1"/>
        <end position="243"/>
    </location>
</feature>
<feature type="active site" description="Proton acceptor" evidence="1">
    <location>
        <position position="8"/>
    </location>
</feature>
<feature type="active site" description="Proton donor" evidence="1">
    <location>
        <position position="129"/>
    </location>
</feature>
<keyword id="KW-0028">Amino-acid biosynthesis</keyword>
<keyword id="KW-0963">Cytoplasm</keyword>
<keyword id="KW-0368">Histidine biosynthesis</keyword>
<keyword id="KW-0413">Isomerase</keyword>
<gene>
    <name evidence="1" type="primary">hisA</name>
    <name type="ordered locus">BruAb1_2059</name>
</gene>
<dbReference type="EC" id="5.3.1.16" evidence="1"/>
<dbReference type="EMBL" id="AE017223">
    <property type="protein sequence ID" value="AAX75360.1"/>
    <property type="molecule type" value="Genomic_DNA"/>
</dbReference>
<dbReference type="RefSeq" id="WP_002965150.1">
    <property type="nucleotide sequence ID" value="NC_006932.1"/>
</dbReference>
<dbReference type="SMR" id="Q57AH4"/>
<dbReference type="EnsemblBacteria" id="AAX75360">
    <property type="protein sequence ID" value="AAX75360"/>
    <property type="gene ID" value="BruAb1_2059"/>
</dbReference>
<dbReference type="GeneID" id="97534653"/>
<dbReference type="KEGG" id="bmb:BruAb1_2059"/>
<dbReference type="HOGENOM" id="CLU_048577_1_1_5"/>
<dbReference type="UniPathway" id="UPA00031">
    <property type="reaction ID" value="UER00009"/>
</dbReference>
<dbReference type="Proteomes" id="UP000000540">
    <property type="component" value="Chromosome I"/>
</dbReference>
<dbReference type="GO" id="GO:0005737">
    <property type="term" value="C:cytoplasm"/>
    <property type="evidence" value="ECO:0007669"/>
    <property type="project" value="UniProtKB-SubCell"/>
</dbReference>
<dbReference type="GO" id="GO:0003949">
    <property type="term" value="F:1-(5-phosphoribosyl)-5-[(5-phosphoribosylamino)methylideneamino]imidazole-4-carboxamide isomerase activity"/>
    <property type="evidence" value="ECO:0007669"/>
    <property type="project" value="UniProtKB-UniRule"/>
</dbReference>
<dbReference type="GO" id="GO:0000105">
    <property type="term" value="P:L-histidine biosynthetic process"/>
    <property type="evidence" value="ECO:0007669"/>
    <property type="project" value="UniProtKB-UniRule"/>
</dbReference>
<dbReference type="GO" id="GO:0000162">
    <property type="term" value="P:L-tryptophan biosynthetic process"/>
    <property type="evidence" value="ECO:0007669"/>
    <property type="project" value="TreeGrafter"/>
</dbReference>
<dbReference type="CDD" id="cd04732">
    <property type="entry name" value="HisA"/>
    <property type="match status" value="1"/>
</dbReference>
<dbReference type="FunFam" id="3.20.20.70:FF:000009">
    <property type="entry name" value="1-(5-phosphoribosyl)-5-[(5-phosphoribosylamino)methylideneamino] imidazole-4-carboxamide isomerase"/>
    <property type="match status" value="1"/>
</dbReference>
<dbReference type="Gene3D" id="3.20.20.70">
    <property type="entry name" value="Aldolase class I"/>
    <property type="match status" value="1"/>
</dbReference>
<dbReference type="HAMAP" id="MF_01014">
    <property type="entry name" value="HisA"/>
    <property type="match status" value="1"/>
</dbReference>
<dbReference type="InterPro" id="IPR013785">
    <property type="entry name" value="Aldolase_TIM"/>
</dbReference>
<dbReference type="InterPro" id="IPR006062">
    <property type="entry name" value="His_biosynth"/>
</dbReference>
<dbReference type="InterPro" id="IPR006063">
    <property type="entry name" value="HisA_bact_arch"/>
</dbReference>
<dbReference type="InterPro" id="IPR044524">
    <property type="entry name" value="Isoase_HisA-like"/>
</dbReference>
<dbReference type="InterPro" id="IPR023016">
    <property type="entry name" value="Isoase_HisA-like_bact"/>
</dbReference>
<dbReference type="InterPro" id="IPR011060">
    <property type="entry name" value="RibuloseP-bd_barrel"/>
</dbReference>
<dbReference type="NCBIfam" id="TIGR00007">
    <property type="entry name" value="1-(5-phosphoribosyl)-5-[(5-phosphoribosylamino)methylideneamino]imidazole-4-carboxamide isomerase"/>
    <property type="match status" value="1"/>
</dbReference>
<dbReference type="PANTHER" id="PTHR43090">
    <property type="entry name" value="1-(5-PHOSPHORIBOSYL)-5-[(5-PHOSPHORIBOSYLAMINO)METHYLIDENEAMINO] IMIDAZOLE-4-CARBOXAMIDE ISOMERASE"/>
    <property type="match status" value="1"/>
</dbReference>
<dbReference type="PANTHER" id="PTHR43090:SF2">
    <property type="entry name" value="1-(5-PHOSPHORIBOSYL)-5-[(5-PHOSPHORIBOSYLAMINO)METHYLIDENEAMINO] IMIDAZOLE-4-CARBOXAMIDE ISOMERASE"/>
    <property type="match status" value="1"/>
</dbReference>
<dbReference type="Pfam" id="PF00977">
    <property type="entry name" value="His_biosynth"/>
    <property type="match status" value="1"/>
</dbReference>
<dbReference type="SUPFAM" id="SSF51366">
    <property type="entry name" value="Ribulose-phoshate binding barrel"/>
    <property type="match status" value="1"/>
</dbReference>
<protein>
    <recommendedName>
        <fullName evidence="1">1-(5-phosphoribosyl)-5-[(5-phosphoribosylamino)methylideneamino] imidazole-4-carboxamide isomerase</fullName>
        <ecNumber evidence="1">5.3.1.16</ecNumber>
    </recommendedName>
    <alternativeName>
        <fullName evidence="1">Phosphoribosylformimino-5-aminoimidazole carboxamide ribotide isomerase</fullName>
    </alternativeName>
</protein>